<organism>
    <name type="scientific">Bordetella parapertussis (strain 12822 / ATCC BAA-587 / NCTC 13253)</name>
    <dbReference type="NCBI Taxonomy" id="257311"/>
    <lineage>
        <taxon>Bacteria</taxon>
        <taxon>Pseudomonadati</taxon>
        <taxon>Pseudomonadota</taxon>
        <taxon>Betaproteobacteria</taxon>
        <taxon>Burkholderiales</taxon>
        <taxon>Alcaligenaceae</taxon>
        <taxon>Bordetella</taxon>
    </lineage>
</organism>
<feature type="chain" id="PRO_1000025690" description="Cell division protein FtsB">
    <location>
        <begin position="1"/>
        <end position="118"/>
    </location>
</feature>
<feature type="topological domain" description="Cytoplasmic" evidence="1">
    <location>
        <begin position="1"/>
        <end position="3"/>
    </location>
</feature>
<feature type="transmembrane region" description="Helical" evidence="1">
    <location>
        <begin position="4"/>
        <end position="21"/>
    </location>
</feature>
<feature type="topological domain" description="Periplasmic" evidence="1">
    <location>
        <begin position="22"/>
        <end position="118"/>
    </location>
</feature>
<feature type="region of interest" description="Disordered" evidence="2">
    <location>
        <begin position="88"/>
        <end position="118"/>
    </location>
</feature>
<feature type="coiled-coil region" evidence="1">
    <location>
        <begin position="28"/>
        <end position="62"/>
    </location>
</feature>
<feature type="compositionally biased region" description="Polar residues" evidence="2">
    <location>
        <begin position="95"/>
        <end position="105"/>
    </location>
</feature>
<feature type="compositionally biased region" description="Pro residues" evidence="2">
    <location>
        <begin position="109"/>
        <end position="118"/>
    </location>
</feature>
<name>FTSB_BORPA</name>
<keyword id="KW-0131">Cell cycle</keyword>
<keyword id="KW-0132">Cell division</keyword>
<keyword id="KW-0997">Cell inner membrane</keyword>
<keyword id="KW-1003">Cell membrane</keyword>
<keyword id="KW-0175">Coiled coil</keyword>
<keyword id="KW-0472">Membrane</keyword>
<keyword id="KW-0812">Transmembrane</keyword>
<keyword id="KW-1133">Transmembrane helix</keyword>
<proteinExistence type="inferred from homology"/>
<accession>Q7W5P0</accession>
<dbReference type="EMBL" id="BX640433">
    <property type="protein sequence ID" value="CAE38536.1"/>
    <property type="molecule type" value="Genomic_DNA"/>
</dbReference>
<dbReference type="RefSeq" id="WP_010928972.1">
    <property type="nucleotide sequence ID" value="NC_002928.3"/>
</dbReference>
<dbReference type="SMR" id="Q7W5P0"/>
<dbReference type="GeneID" id="93205033"/>
<dbReference type="KEGG" id="bpa:BPP3251"/>
<dbReference type="HOGENOM" id="CLU_134863_5_2_4"/>
<dbReference type="Proteomes" id="UP000001421">
    <property type="component" value="Chromosome"/>
</dbReference>
<dbReference type="GO" id="GO:0032153">
    <property type="term" value="C:cell division site"/>
    <property type="evidence" value="ECO:0007669"/>
    <property type="project" value="UniProtKB-UniRule"/>
</dbReference>
<dbReference type="GO" id="GO:0030428">
    <property type="term" value="C:cell septum"/>
    <property type="evidence" value="ECO:0007669"/>
    <property type="project" value="TreeGrafter"/>
</dbReference>
<dbReference type="GO" id="GO:0005886">
    <property type="term" value="C:plasma membrane"/>
    <property type="evidence" value="ECO:0007669"/>
    <property type="project" value="UniProtKB-SubCell"/>
</dbReference>
<dbReference type="GO" id="GO:0043093">
    <property type="term" value="P:FtsZ-dependent cytokinesis"/>
    <property type="evidence" value="ECO:0007669"/>
    <property type="project" value="UniProtKB-UniRule"/>
</dbReference>
<dbReference type="HAMAP" id="MF_00599">
    <property type="entry name" value="FtsB"/>
    <property type="match status" value="1"/>
</dbReference>
<dbReference type="InterPro" id="IPR023081">
    <property type="entry name" value="Cell_div_FtsB"/>
</dbReference>
<dbReference type="InterPro" id="IPR007060">
    <property type="entry name" value="FtsL/DivIC"/>
</dbReference>
<dbReference type="NCBIfam" id="NF002058">
    <property type="entry name" value="PRK00888.1"/>
    <property type="match status" value="1"/>
</dbReference>
<dbReference type="PANTHER" id="PTHR37485">
    <property type="entry name" value="CELL DIVISION PROTEIN FTSB"/>
    <property type="match status" value="1"/>
</dbReference>
<dbReference type="PANTHER" id="PTHR37485:SF1">
    <property type="entry name" value="CELL DIVISION PROTEIN FTSB"/>
    <property type="match status" value="1"/>
</dbReference>
<dbReference type="Pfam" id="PF04977">
    <property type="entry name" value="DivIC"/>
    <property type="match status" value="1"/>
</dbReference>
<gene>
    <name evidence="1" type="primary">ftsB</name>
    <name type="ordered locus">BPP3251</name>
</gene>
<evidence type="ECO:0000255" key="1">
    <source>
        <dbReference type="HAMAP-Rule" id="MF_00599"/>
    </source>
</evidence>
<evidence type="ECO:0000256" key="2">
    <source>
        <dbReference type="SAM" id="MobiDB-lite"/>
    </source>
</evidence>
<reference key="1">
    <citation type="journal article" date="2003" name="Nat. Genet.">
        <title>Comparative analysis of the genome sequences of Bordetella pertussis, Bordetella parapertussis and Bordetella bronchiseptica.</title>
        <authorList>
            <person name="Parkhill J."/>
            <person name="Sebaihia M."/>
            <person name="Preston A."/>
            <person name="Murphy L.D."/>
            <person name="Thomson N.R."/>
            <person name="Harris D.E."/>
            <person name="Holden M.T.G."/>
            <person name="Churcher C.M."/>
            <person name="Bentley S.D."/>
            <person name="Mungall K.L."/>
            <person name="Cerdeno-Tarraga A.-M."/>
            <person name="Temple L."/>
            <person name="James K.D."/>
            <person name="Harris B."/>
            <person name="Quail M.A."/>
            <person name="Achtman M."/>
            <person name="Atkin R."/>
            <person name="Baker S."/>
            <person name="Basham D."/>
            <person name="Bason N."/>
            <person name="Cherevach I."/>
            <person name="Chillingworth T."/>
            <person name="Collins M."/>
            <person name="Cronin A."/>
            <person name="Davis P."/>
            <person name="Doggett J."/>
            <person name="Feltwell T."/>
            <person name="Goble A."/>
            <person name="Hamlin N."/>
            <person name="Hauser H."/>
            <person name="Holroyd S."/>
            <person name="Jagels K."/>
            <person name="Leather S."/>
            <person name="Moule S."/>
            <person name="Norberczak H."/>
            <person name="O'Neil S."/>
            <person name="Ormond D."/>
            <person name="Price C."/>
            <person name="Rabbinowitsch E."/>
            <person name="Rutter S."/>
            <person name="Sanders M."/>
            <person name="Saunders D."/>
            <person name="Seeger K."/>
            <person name="Sharp S."/>
            <person name="Simmonds M."/>
            <person name="Skelton J."/>
            <person name="Squares R."/>
            <person name="Squares S."/>
            <person name="Stevens K."/>
            <person name="Unwin L."/>
            <person name="Whitehead S."/>
            <person name="Barrell B.G."/>
            <person name="Maskell D.J."/>
        </authorList>
    </citation>
    <scope>NUCLEOTIDE SEQUENCE [LARGE SCALE GENOMIC DNA]</scope>
    <source>
        <strain>12822 / ATCC BAA-587 / NCTC 13253</strain>
    </source>
</reference>
<protein>
    <recommendedName>
        <fullName evidence="1">Cell division protein FtsB</fullName>
    </recommendedName>
</protein>
<comment type="function">
    <text evidence="1">Essential cell division protein. May link together the upstream cell division proteins, which are predominantly cytoplasmic, with the downstream cell division proteins, which are predominantly periplasmic.</text>
</comment>
<comment type="subunit">
    <text evidence="1">Part of a complex composed of FtsB, FtsL and FtsQ.</text>
</comment>
<comment type="subcellular location">
    <subcellularLocation>
        <location evidence="1">Cell inner membrane</location>
        <topology evidence="1">Single-pass type II membrane protein</topology>
    </subcellularLocation>
    <text evidence="1">Localizes to the division septum.</text>
</comment>
<comment type="similarity">
    <text evidence="1">Belongs to the FtsB family.</text>
</comment>
<sequence>MRLLFLVLLVLLGLIQYPLWLGKGGWFKVWDLQRQVAEQRETNDGLRARNTALEAEVRDLATGVGAVEERARSELGMMREGEVFVHILPPGTPLPSGNSTPQASALSKPRPPATPPRR</sequence>